<reference key="1">
    <citation type="journal article" date="2002" name="Nature">
        <title>The genome sequence of Schizosaccharomyces pombe.</title>
        <authorList>
            <person name="Wood V."/>
            <person name="Gwilliam R."/>
            <person name="Rajandream M.A."/>
            <person name="Lyne M.H."/>
            <person name="Lyne R."/>
            <person name="Stewart A."/>
            <person name="Sgouros J.G."/>
            <person name="Peat N."/>
            <person name="Hayles J."/>
            <person name="Baker S.G."/>
            <person name="Basham D."/>
            <person name="Bowman S."/>
            <person name="Brooks K."/>
            <person name="Brown D."/>
            <person name="Brown S."/>
            <person name="Chillingworth T."/>
            <person name="Churcher C.M."/>
            <person name="Collins M."/>
            <person name="Connor R."/>
            <person name="Cronin A."/>
            <person name="Davis P."/>
            <person name="Feltwell T."/>
            <person name="Fraser A."/>
            <person name="Gentles S."/>
            <person name="Goble A."/>
            <person name="Hamlin N."/>
            <person name="Harris D.E."/>
            <person name="Hidalgo J."/>
            <person name="Hodgson G."/>
            <person name="Holroyd S."/>
            <person name="Hornsby T."/>
            <person name="Howarth S."/>
            <person name="Huckle E.J."/>
            <person name="Hunt S."/>
            <person name="Jagels K."/>
            <person name="James K.D."/>
            <person name="Jones L."/>
            <person name="Jones M."/>
            <person name="Leather S."/>
            <person name="McDonald S."/>
            <person name="McLean J."/>
            <person name="Mooney P."/>
            <person name="Moule S."/>
            <person name="Mungall K.L."/>
            <person name="Murphy L.D."/>
            <person name="Niblett D."/>
            <person name="Odell C."/>
            <person name="Oliver K."/>
            <person name="O'Neil S."/>
            <person name="Pearson D."/>
            <person name="Quail M.A."/>
            <person name="Rabbinowitsch E."/>
            <person name="Rutherford K.M."/>
            <person name="Rutter S."/>
            <person name="Saunders D."/>
            <person name="Seeger K."/>
            <person name="Sharp S."/>
            <person name="Skelton J."/>
            <person name="Simmonds M.N."/>
            <person name="Squares R."/>
            <person name="Squares S."/>
            <person name="Stevens K."/>
            <person name="Taylor K."/>
            <person name="Taylor R.G."/>
            <person name="Tivey A."/>
            <person name="Walsh S.V."/>
            <person name="Warren T."/>
            <person name="Whitehead S."/>
            <person name="Woodward J.R."/>
            <person name="Volckaert G."/>
            <person name="Aert R."/>
            <person name="Robben J."/>
            <person name="Grymonprez B."/>
            <person name="Weltjens I."/>
            <person name="Vanstreels E."/>
            <person name="Rieger M."/>
            <person name="Schaefer M."/>
            <person name="Mueller-Auer S."/>
            <person name="Gabel C."/>
            <person name="Fuchs M."/>
            <person name="Duesterhoeft A."/>
            <person name="Fritzc C."/>
            <person name="Holzer E."/>
            <person name="Moestl D."/>
            <person name="Hilbert H."/>
            <person name="Borzym K."/>
            <person name="Langer I."/>
            <person name="Beck A."/>
            <person name="Lehrach H."/>
            <person name="Reinhardt R."/>
            <person name="Pohl T.M."/>
            <person name="Eger P."/>
            <person name="Zimmermann W."/>
            <person name="Wedler H."/>
            <person name="Wambutt R."/>
            <person name="Purnelle B."/>
            <person name="Goffeau A."/>
            <person name="Cadieu E."/>
            <person name="Dreano S."/>
            <person name="Gloux S."/>
            <person name="Lelaure V."/>
            <person name="Mottier S."/>
            <person name="Galibert F."/>
            <person name="Aves S.J."/>
            <person name="Xiang Z."/>
            <person name="Hunt C."/>
            <person name="Moore K."/>
            <person name="Hurst S.M."/>
            <person name="Lucas M."/>
            <person name="Rochet M."/>
            <person name="Gaillardin C."/>
            <person name="Tallada V.A."/>
            <person name="Garzon A."/>
            <person name="Thode G."/>
            <person name="Daga R.R."/>
            <person name="Cruzado L."/>
            <person name="Jimenez J."/>
            <person name="Sanchez M."/>
            <person name="del Rey F."/>
            <person name="Benito J."/>
            <person name="Dominguez A."/>
            <person name="Revuelta J.L."/>
            <person name="Moreno S."/>
            <person name="Armstrong J."/>
            <person name="Forsburg S.L."/>
            <person name="Cerutti L."/>
            <person name="Lowe T."/>
            <person name="McCombie W.R."/>
            <person name="Paulsen I."/>
            <person name="Potashkin J."/>
            <person name="Shpakovski G.V."/>
            <person name="Ussery D."/>
            <person name="Barrell B.G."/>
            <person name="Nurse P."/>
        </authorList>
    </citation>
    <scope>NUCLEOTIDE SEQUENCE [LARGE SCALE GENOMIC DNA]</scope>
    <source>
        <strain>972 / ATCC 24843</strain>
    </source>
</reference>
<reference key="2">
    <citation type="journal article" date="2006" name="Nat. Biotechnol.">
        <title>ORFeome cloning and global analysis of protein localization in the fission yeast Schizosaccharomyces pombe.</title>
        <authorList>
            <person name="Matsuyama A."/>
            <person name="Arai R."/>
            <person name="Yashiroda Y."/>
            <person name="Shirai A."/>
            <person name="Kamata A."/>
            <person name="Sekido S."/>
            <person name="Kobayashi Y."/>
            <person name="Hashimoto A."/>
            <person name="Hamamoto M."/>
            <person name="Hiraoka Y."/>
            <person name="Horinouchi S."/>
            <person name="Yoshida M."/>
        </authorList>
    </citation>
    <scope>SUBCELLULAR LOCATION [LARGE SCALE ANALYSIS]</scope>
</reference>
<sequence length="412" mass="45590">MYRLKCDVKSYGWGKVGHESLAAKLAEAGYGFEVDPNTPYAELWMGSHPSGPSFVMQTGKPLSELLTPETVGEKVYKKYGKQLPFLFKVLSINKVLSIQAHPDKPLGKQLHKTNPKEYKDDNHKPEMAVALTEFDALCGFRPVKQIEQFLDSIAPLREFVGEEAVRQFKGTVKQDERKALETLFNELMHKDEKRIQEFTPQLVQLAKSDANNFGGTEYGGKAFSDLIIHLNSQFPDDIGLFVTPFLNYVRLHPGEAVFLRALDPHAYVSGNIIECMAASDNVIRLGFTPKFKDIETLVNNLTYQTADAKSQLTQPVPFAKACGSGKTLLYDPPIEEFSILQTKVSPGQKQCIRGINGPSILLVTEGSGILNGDKGDVASISPGFVYFISANFPLTISATSEPVVVYQAFCEI</sequence>
<evidence type="ECO:0000250" key="1"/>
<evidence type="ECO:0000269" key="2">
    <source>
    </source>
</evidence>
<evidence type="ECO:0000305" key="3"/>
<proteinExistence type="inferred from homology"/>
<accession>O43014</accession>
<feature type="chain" id="PRO_0000314774" description="Mannose-6-phosphate isomerase">
    <location>
        <begin position="1"/>
        <end position="412"/>
    </location>
</feature>
<feature type="active site" evidence="1">
    <location>
        <position position="284"/>
    </location>
</feature>
<feature type="binding site" evidence="1">
    <location>
        <position position="99"/>
    </location>
    <ligand>
        <name>Zn(2+)</name>
        <dbReference type="ChEBI" id="CHEBI:29105"/>
    </ligand>
</feature>
<feature type="binding site" evidence="1">
    <location>
        <position position="101"/>
    </location>
    <ligand>
        <name>Zn(2+)</name>
        <dbReference type="ChEBI" id="CHEBI:29105"/>
    </ligand>
</feature>
<feature type="binding site" evidence="1">
    <location>
        <position position="126"/>
    </location>
    <ligand>
        <name>Zn(2+)</name>
        <dbReference type="ChEBI" id="CHEBI:29105"/>
    </ligand>
</feature>
<feature type="binding site" evidence="1">
    <location>
        <position position="265"/>
    </location>
    <ligand>
        <name>Zn(2+)</name>
        <dbReference type="ChEBI" id="CHEBI:29105"/>
    </ligand>
</feature>
<keyword id="KW-0963">Cytoplasm</keyword>
<keyword id="KW-0413">Isomerase</keyword>
<keyword id="KW-0479">Metal-binding</keyword>
<keyword id="KW-0539">Nucleus</keyword>
<keyword id="KW-1185">Reference proteome</keyword>
<keyword id="KW-0862">Zinc</keyword>
<gene>
    <name type="primary">pmi40</name>
    <name type="ORF">SPBC2G2.16</name>
</gene>
<organism>
    <name type="scientific">Schizosaccharomyces pombe (strain 972 / ATCC 24843)</name>
    <name type="common">Fission yeast</name>
    <dbReference type="NCBI Taxonomy" id="284812"/>
    <lineage>
        <taxon>Eukaryota</taxon>
        <taxon>Fungi</taxon>
        <taxon>Dikarya</taxon>
        <taxon>Ascomycota</taxon>
        <taxon>Taphrinomycotina</taxon>
        <taxon>Schizosaccharomycetes</taxon>
        <taxon>Schizosaccharomycetales</taxon>
        <taxon>Schizosaccharomycetaceae</taxon>
        <taxon>Schizosaccharomyces</taxon>
    </lineage>
</organism>
<dbReference type="EC" id="5.3.1.8"/>
<dbReference type="EMBL" id="CU329671">
    <property type="protein sequence ID" value="CAA17896.1"/>
    <property type="molecule type" value="Genomic_DNA"/>
</dbReference>
<dbReference type="PIR" id="T40155">
    <property type="entry name" value="T40155"/>
</dbReference>
<dbReference type="SMR" id="O43014"/>
<dbReference type="FunCoup" id="O43014">
    <property type="interactions" value="509"/>
</dbReference>
<dbReference type="STRING" id="284812.O43014"/>
<dbReference type="iPTMnet" id="O43014"/>
<dbReference type="PaxDb" id="4896-SPBC2G2.16.1"/>
<dbReference type="EnsemblFungi" id="SPBC2G2.16.1">
    <property type="protein sequence ID" value="SPBC2G2.16.1:pep"/>
    <property type="gene ID" value="SPBC2G2.16"/>
</dbReference>
<dbReference type="KEGG" id="spo:2540428"/>
<dbReference type="PomBase" id="SPBC2G2.16"/>
<dbReference type="VEuPathDB" id="FungiDB:SPBC2G2.16"/>
<dbReference type="eggNOG" id="KOG2757">
    <property type="taxonomic scope" value="Eukaryota"/>
</dbReference>
<dbReference type="HOGENOM" id="CLU_026967_0_0_1"/>
<dbReference type="InParanoid" id="O43014"/>
<dbReference type="OMA" id="DIGLFCG"/>
<dbReference type="PhylomeDB" id="O43014"/>
<dbReference type="Reactome" id="R-SPO-446205">
    <property type="pathway name" value="Synthesis of GDP-mannose"/>
</dbReference>
<dbReference type="UniPathway" id="UPA00126">
    <property type="reaction ID" value="UER00423"/>
</dbReference>
<dbReference type="PRO" id="PR:O43014"/>
<dbReference type="Proteomes" id="UP000002485">
    <property type="component" value="Chromosome II"/>
</dbReference>
<dbReference type="GO" id="GO:0005829">
    <property type="term" value="C:cytosol"/>
    <property type="evidence" value="ECO:0007005"/>
    <property type="project" value="PomBase"/>
</dbReference>
<dbReference type="GO" id="GO:0005634">
    <property type="term" value="C:nucleus"/>
    <property type="evidence" value="ECO:0007005"/>
    <property type="project" value="PomBase"/>
</dbReference>
<dbReference type="GO" id="GO:0004476">
    <property type="term" value="F:mannose-6-phosphate isomerase activity"/>
    <property type="evidence" value="ECO:0000318"/>
    <property type="project" value="GO_Central"/>
</dbReference>
<dbReference type="GO" id="GO:0008270">
    <property type="term" value="F:zinc ion binding"/>
    <property type="evidence" value="ECO:0007669"/>
    <property type="project" value="InterPro"/>
</dbReference>
<dbReference type="GO" id="GO:0005975">
    <property type="term" value="P:carbohydrate metabolic process"/>
    <property type="evidence" value="ECO:0007669"/>
    <property type="project" value="InterPro"/>
</dbReference>
<dbReference type="GO" id="GO:0009298">
    <property type="term" value="P:GDP-mannose biosynthetic process"/>
    <property type="evidence" value="ECO:0000318"/>
    <property type="project" value="GO_Central"/>
</dbReference>
<dbReference type="GO" id="GO:0006486">
    <property type="term" value="P:protein glycosylation"/>
    <property type="evidence" value="ECO:0000266"/>
    <property type="project" value="PomBase"/>
</dbReference>
<dbReference type="CDD" id="cd07011">
    <property type="entry name" value="cupin_PMI_type_I_N"/>
    <property type="match status" value="1"/>
</dbReference>
<dbReference type="FunFam" id="1.10.441.10:FF:000003">
    <property type="entry name" value="Mannose-6-phosphate isomerase"/>
    <property type="match status" value="1"/>
</dbReference>
<dbReference type="Gene3D" id="2.60.120.10">
    <property type="entry name" value="Jelly Rolls"/>
    <property type="match status" value="2"/>
</dbReference>
<dbReference type="Gene3D" id="1.10.441.10">
    <property type="entry name" value="Phosphomannose Isomerase, domain 2"/>
    <property type="match status" value="1"/>
</dbReference>
<dbReference type="InterPro" id="IPR001250">
    <property type="entry name" value="Man6P_Isoase-1"/>
</dbReference>
<dbReference type="InterPro" id="IPR016305">
    <property type="entry name" value="Mannose-6-P_Isomerase"/>
</dbReference>
<dbReference type="InterPro" id="IPR018050">
    <property type="entry name" value="Pmannose_isomerase-type1_CS"/>
</dbReference>
<dbReference type="InterPro" id="IPR046456">
    <property type="entry name" value="PMI_typeI_C"/>
</dbReference>
<dbReference type="InterPro" id="IPR046457">
    <property type="entry name" value="PMI_typeI_cat"/>
</dbReference>
<dbReference type="InterPro" id="IPR046458">
    <property type="entry name" value="PMI_typeI_hel"/>
</dbReference>
<dbReference type="InterPro" id="IPR014710">
    <property type="entry name" value="RmlC-like_jellyroll"/>
</dbReference>
<dbReference type="InterPro" id="IPR011051">
    <property type="entry name" value="RmlC_Cupin_sf"/>
</dbReference>
<dbReference type="NCBIfam" id="TIGR00218">
    <property type="entry name" value="manA"/>
    <property type="match status" value="1"/>
</dbReference>
<dbReference type="PANTHER" id="PTHR10309">
    <property type="entry name" value="MANNOSE-6-PHOSPHATE ISOMERASE"/>
    <property type="match status" value="1"/>
</dbReference>
<dbReference type="PANTHER" id="PTHR10309:SF0">
    <property type="entry name" value="MANNOSE-6-PHOSPHATE ISOMERASE"/>
    <property type="match status" value="1"/>
</dbReference>
<dbReference type="Pfam" id="PF01238">
    <property type="entry name" value="PMI_typeI_C"/>
    <property type="match status" value="1"/>
</dbReference>
<dbReference type="Pfam" id="PF20511">
    <property type="entry name" value="PMI_typeI_cat"/>
    <property type="match status" value="1"/>
</dbReference>
<dbReference type="Pfam" id="PF20512">
    <property type="entry name" value="PMI_typeI_hel"/>
    <property type="match status" value="1"/>
</dbReference>
<dbReference type="PIRSF" id="PIRSF001480">
    <property type="entry name" value="Mannose-6-phosphate_isomerase"/>
    <property type="match status" value="1"/>
</dbReference>
<dbReference type="PRINTS" id="PR00714">
    <property type="entry name" value="MAN6PISMRASE"/>
</dbReference>
<dbReference type="SUPFAM" id="SSF51182">
    <property type="entry name" value="RmlC-like cupins"/>
    <property type="match status" value="1"/>
</dbReference>
<dbReference type="PROSITE" id="PS00965">
    <property type="entry name" value="PMI_I_1"/>
    <property type="match status" value="1"/>
</dbReference>
<name>MPI_SCHPO</name>
<comment type="function">
    <text evidence="1">Involved in the synthesis of the GDP-mannose and dolichol-phosphate-mannose required for a number of critical mannosyl transfer reactions.</text>
</comment>
<comment type="catalytic activity">
    <reaction>
        <text>D-mannose 6-phosphate = D-fructose 6-phosphate</text>
        <dbReference type="Rhea" id="RHEA:12356"/>
        <dbReference type="ChEBI" id="CHEBI:58735"/>
        <dbReference type="ChEBI" id="CHEBI:61527"/>
        <dbReference type="EC" id="5.3.1.8"/>
    </reaction>
</comment>
<comment type="cofactor">
    <cofactor evidence="1">
        <name>Zn(2+)</name>
        <dbReference type="ChEBI" id="CHEBI:29105"/>
    </cofactor>
    <text evidence="1">Binds 1 zinc ion per subunit.</text>
</comment>
<comment type="pathway">
    <text>Nucleotide-sugar biosynthesis; GDP-alpha-D-mannose biosynthesis; alpha-D-mannose 1-phosphate from D-fructose 6-phosphate: step 1/2.</text>
</comment>
<comment type="subcellular location">
    <subcellularLocation>
        <location evidence="2">Cytoplasm</location>
    </subcellularLocation>
    <subcellularLocation>
        <location evidence="2">Nucleus</location>
    </subcellularLocation>
</comment>
<comment type="similarity">
    <text evidence="3">Belongs to the mannose-6-phosphate isomerase type 1 family.</text>
</comment>
<protein>
    <recommendedName>
        <fullName>Mannose-6-phosphate isomerase</fullName>
        <ecNumber>5.3.1.8</ecNumber>
    </recommendedName>
    <alternativeName>
        <fullName>Phosphohexomutase</fullName>
    </alternativeName>
    <alternativeName>
        <fullName>Phosphomannose isomerase</fullName>
        <shortName>PMI</shortName>
    </alternativeName>
</protein>